<feature type="chain" id="PRO_1000051364" description="Small ribosomal subunit protein uS9">
    <location>
        <begin position="1"/>
        <end position="130"/>
    </location>
</feature>
<evidence type="ECO:0000255" key="1">
    <source>
        <dbReference type="HAMAP-Rule" id="MF_00532"/>
    </source>
</evidence>
<evidence type="ECO:0000305" key="2"/>
<protein>
    <recommendedName>
        <fullName evidence="1">Small ribosomal subunit protein uS9</fullName>
    </recommendedName>
    <alternativeName>
        <fullName evidence="2">30S ribosomal protein S9</fullName>
    </alternativeName>
</protein>
<name>RS9_XANE5</name>
<comment type="similarity">
    <text evidence="1">Belongs to the universal ribosomal protein uS9 family.</text>
</comment>
<organism>
    <name type="scientific">Xanthomonas euvesicatoria pv. vesicatoria (strain 85-10)</name>
    <name type="common">Xanthomonas campestris pv. vesicatoria</name>
    <dbReference type="NCBI Taxonomy" id="316273"/>
    <lineage>
        <taxon>Bacteria</taxon>
        <taxon>Pseudomonadati</taxon>
        <taxon>Pseudomonadota</taxon>
        <taxon>Gammaproteobacteria</taxon>
        <taxon>Lysobacterales</taxon>
        <taxon>Lysobacteraceae</taxon>
        <taxon>Xanthomonas</taxon>
    </lineage>
</organism>
<sequence length="130" mass="14523">MAITQNYGTGRRKSSTARVFLRKGTGNITVNDRPLDEFFGRETARMIVRQPLELTKNTESFDIMVTASGGGTTGQAGAIRLGIARALVEYDETLKSELRKAGFMTRDAREVERKKVGLHKARRATQFSKR</sequence>
<reference key="1">
    <citation type="journal article" date="2005" name="J. Bacteriol.">
        <title>Insights into genome plasticity and pathogenicity of the plant pathogenic Bacterium Xanthomonas campestris pv. vesicatoria revealed by the complete genome sequence.</title>
        <authorList>
            <person name="Thieme F."/>
            <person name="Koebnik R."/>
            <person name="Bekel T."/>
            <person name="Berger C."/>
            <person name="Boch J."/>
            <person name="Buettner D."/>
            <person name="Caldana C."/>
            <person name="Gaigalat L."/>
            <person name="Goesmann A."/>
            <person name="Kay S."/>
            <person name="Kirchner O."/>
            <person name="Lanz C."/>
            <person name="Linke B."/>
            <person name="McHardy A.C."/>
            <person name="Meyer F."/>
            <person name="Mittenhuber G."/>
            <person name="Nies D.H."/>
            <person name="Niesbach-Kloesgen U."/>
            <person name="Patschkowski T."/>
            <person name="Rueckert C."/>
            <person name="Rupp O."/>
            <person name="Schneiker S."/>
            <person name="Schuster S.C."/>
            <person name="Vorhoelter F.J."/>
            <person name="Weber E."/>
            <person name="Puehler A."/>
            <person name="Bonas U."/>
            <person name="Bartels D."/>
            <person name="Kaiser O."/>
        </authorList>
    </citation>
    <scope>NUCLEOTIDE SEQUENCE [LARGE SCALE GENOMIC DNA]</scope>
    <source>
        <strain>85-10</strain>
    </source>
</reference>
<gene>
    <name evidence="1" type="primary">rpsI</name>
    <name type="ordered locus">XCV0524</name>
</gene>
<keyword id="KW-0687">Ribonucleoprotein</keyword>
<keyword id="KW-0689">Ribosomal protein</keyword>
<proteinExistence type="inferred from homology"/>
<dbReference type="EMBL" id="AM039952">
    <property type="protein sequence ID" value="CAJ22155.1"/>
    <property type="molecule type" value="Genomic_DNA"/>
</dbReference>
<dbReference type="RefSeq" id="WP_003483085.1">
    <property type="nucleotide sequence ID" value="NZ_CP017190.1"/>
</dbReference>
<dbReference type="SMR" id="Q3BYA8"/>
<dbReference type="STRING" id="456327.BJD11_20255"/>
<dbReference type="GeneID" id="97508877"/>
<dbReference type="KEGG" id="xcv:XCV0524"/>
<dbReference type="eggNOG" id="COG0103">
    <property type="taxonomic scope" value="Bacteria"/>
</dbReference>
<dbReference type="HOGENOM" id="CLU_046483_2_1_6"/>
<dbReference type="Proteomes" id="UP000007069">
    <property type="component" value="Chromosome"/>
</dbReference>
<dbReference type="GO" id="GO:0022627">
    <property type="term" value="C:cytosolic small ribosomal subunit"/>
    <property type="evidence" value="ECO:0007669"/>
    <property type="project" value="TreeGrafter"/>
</dbReference>
<dbReference type="GO" id="GO:0003723">
    <property type="term" value="F:RNA binding"/>
    <property type="evidence" value="ECO:0007669"/>
    <property type="project" value="TreeGrafter"/>
</dbReference>
<dbReference type="GO" id="GO:0003735">
    <property type="term" value="F:structural constituent of ribosome"/>
    <property type="evidence" value="ECO:0007669"/>
    <property type="project" value="InterPro"/>
</dbReference>
<dbReference type="GO" id="GO:0006412">
    <property type="term" value="P:translation"/>
    <property type="evidence" value="ECO:0007669"/>
    <property type="project" value="UniProtKB-UniRule"/>
</dbReference>
<dbReference type="FunFam" id="3.30.230.10:FF:000001">
    <property type="entry name" value="30S ribosomal protein S9"/>
    <property type="match status" value="1"/>
</dbReference>
<dbReference type="Gene3D" id="3.30.230.10">
    <property type="match status" value="1"/>
</dbReference>
<dbReference type="HAMAP" id="MF_00532_B">
    <property type="entry name" value="Ribosomal_uS9_B"/>
    <property type="match status" value="1"/>
</dbReference>
<dbReference type="InterPro" id="IPR020568">
    <property type="entry name" value="Ribosomal_Su5_D2-typ_SF"/>
</dbReference>
<dbReference type="InterPro" id="IPR000754">
    <property type="entry name" value="Ribosomal_uS9"/>
</dbReference>
<dbReference type="InterPro" id="IPR023035">
    <property type="entry name" value="Ribosomal_uS9_bac/plastid"/>
</dbReference>
<dbReference type="InterPro" id="IPR020574">
    <property type="entry name" value="Ribosomal_uS9_CS"/>
</dbReference>
<dbReference type="InterPro" id="IPR014721">
    <property type="entry name" value="Ribsml_uS5_D2-typ_fold_subgr"/>
</dbReference>
<dbReference type="NCBIfam" id="NF001099">
    <property type="entry name" value="PRK00132.1"/>
    <property type="match status" value="1"/>
</dbReference>
<dbReference type="PANTHER" id="PTHR21569">
    <property type="entry name" value="RIBOSOMAL PROTEIN S9"/>
    <property type="match status" value="1"/>
</dbReference>
<dbReference type="PANTHER" id="PTHR21569:SF1">
    <property type="entry name" value="SMALL RIBOSOMAL SUBUNIT PROTEIN US9M"/>
    <property type="match status" value="1"/>
</dbReference>
<dbReference type="Pfam" id="PF00380">
    <property type="entry name" value="Ribosomal_S9"/>
    <property type="match status" value="1"/>
</dbReference>
<dbReference type="SUPFAM" id="SSF54211">
    <property type="entry name" value="Ribosomal protein S5 domain 2-like"/>
    <property type="match status" value="1"/>
</dbReference>
<dbReference type="PROSITE" id="PS00360">
    <property type="entry name" value="RIBOSOMAL_S9"/>
    <property type="match status" value="1"/>
</dbReference>
<accession>Q3BYA8</accession>